<organism>
    <name type="scientific">Bos taurus</name>
    <name type="common">Bovine</name>
    <dbReference type="NCBI Taxonomy" id="9913"/>
    <lineage>
        <taxon>Eukaryota</taxon>
        <taxon>Metazoa</taxon>
        <taxon>Chordata</taxon>
        <taxon>Craniata</taxon>
        <taxon>Vertebrata</taxon>
        <taxon>Euteleostomi</taxon>
        <taxon>Mammalia</taxon>
        <taxon>Eutheria</taxon>
        <taxon>Laurasiatheria</taxon>
        <taxon>Artiodactyla</taxon>
        <taxon>Ruminantia</taxon>
        <taxon>Pecora</taxon>
        <taxon>Bovidae</taxon>
        <taxon>Bovinae</taxon>
        <taxon>Bos</taxon>
    </lineage>
</organism>
<evidence type="ECO:0000250" key="1">
    <source>
        <dbReference type="UniProtKB" id="P21912"/>
    </source>
</evidence>
<evidence type="ECO:0000250" key="2">
    <source>
        <dbReference type="UniProtKB" id="Q007T0"/>
    </source>
</evidence>
<evidence type="ECO:0000250" key="3">
    <source>
        <dbReference type="UniProtKB" id="Q9CQA3"/>
    </source>
</evidence>
<evidence type="ECO:0000250" key="4">
    <source>
        <dbReference type="UniProtKB" id="Q9YHT2"/>
    </source>
</evidence>
<evidence type="ECO:0000255" key="5">
    <source>
        <dbReference type="PROSITE-ProRule" id="PRU00465"/>
    </source>
</evidence>
<evidence type="ECO:0000255" key="6">
    <source>
        <dbReference type="PROSITE-ProRule" id="PRU00711"/>
    </source>
</evidence>
<evidence type="ECO:0000269" key="7">
    <source>
    </source>
</evidence>
<evidence type="ECO:0000269" key="8">
    <source>
    </source>
</evidence>
<evidence type="ECO:0000305" key="9"/>
<evidence type="ECO:0000305" key="10">
    <source>
    </source>
</evidence>
<evidence type="ECO:0000305" key="11">
    <source>
    </source>
</evidence>
<name>SDHB_BOVIN</name>
<keyword id="KW-0001">2Fe-2S</keyword>
<keyword id="KW-0003">3Fe-4S</keyword>
<keyword id="KW-0004">4Fe-4S</keyword>
<keyword id="KW-0007">Acetylation</keyword>
<keyword id="KW-0249">Electron transport</keyword>
<keyword id="KW-0408">Iron</keyword>
<keyword id="KW-0411">Iron-sulfur</keyword>
<keyword id="KW-0472">Membrane</keyword>
<keyword id="KW-0479">Metal-binding</keyword>
<keyword id="KW-0496">Mitochondrion</keyword>
<keyword id="KW-0999">Mitochondrion inner membrane</keyword>
<keyword id="KW-0560">Oxidoreductase</keyword>
<keyword id="KW-1185">Reference proteome</keyword>
<keyword id="KW-0809">Transit peptide</keyword>
<keyword id="KW-0813">Transport</keyword>
<keyword id="KW-0816">Tricarboxylic acid cycle</keyword>
<comment type="function">
    <text evidence="7 8">Iron-sulfur protein (IP) subunit of the succinate dehydrogenase complex (mitochondrial respiratory chain complex II), responsible for transferring electrons from succinate to ubiquinone (coenzyme Q) (PubMed:2902878). SDH also oxidizes malate to the non-canonical enol form of oxaloacetate, enol-oxaloacetate (PubMed:1864383, PubMed:2902878). Enol-oxaloacetate, which is a potent inhibitor of the succinate dehydrogenase activity, is further isomerized into keto-oxaloacetate (PubMed:2902878).</text>
</comment>
<comment type="catalytic activity">
    <reaction evidence="11">
        <text>a quinone + succinate = fumarate + a quinol</text>
        <dbReference type="Rhea" id="RHEA:40523"/>
        <dbReference type="ChEBI" id="CHEBI:24646"/>
        <dbReference type="ChEBI" id="CHEBI:29806"/>
        <dbReference type="ChEBI" id="CHEBI:30031"/>
        <dbReference type="ChEBI" id="CHEBI:132124"/>
        <dbReference type="EC" id="1.3.5.1"/>
    </reaction>
</comment>
<comment type="catalytic activity">
    <reaction evidence="10 11">
        <text>(R)-malate + a quinone = enol-oxaloacetate + a quinol</text>
        <dbReference type="Rhea" id="RHEA:79827"/>
        <dbReference type="ChEBI" id="CHEBI:15588"/>
        <dbReference type="ChEBI" id="CHEBI:17479"/>
        <dbReference type="ChEBI" id="CHEBI:24646"/>
        <dbReference type="ChEBI" id="CHEBI:132124"/>
    </reaction>
    <physiologicalReaction direction="left-to-right" evidence="10 11">
        <dbReference type="Rhea" id="RHEA:79828"/>
    </physiologicalReaction>
</comment>
<comment type="catalytic activity">
    <reaction evidence="10 11">
        <text>(S)-malate + a quinone = enol-oxaloacetate + a quinol</text>
        <dbReference type="Rhea" id="RHEA:79831"/>
        <dbReference type="ChEBI" id="CHEBI:15589"/>
        <dbReference type="ChEBI" id="CHEBI:17479"/>
        <dbReference type="ChEBI" id="CHEBI:24646"/>
        <dbReference type="ChEBI" id="CHEBI:132124"/>
    </reaction>
    <physiologicalReaction direction="left-to-right" evidence="10 11">
        <dbReference type="Rhea" id="RHEA:79832"/>
    </physiologicalReaction>
</comment>
<comment type="cofactor">
    <cofactor evidence="2">
        <name>[2Fe-2S] cluster</name>
        <dbReference type="ChEBI" id="CHEBI:190135"/>
    </cofactor>
    <text evidence="2">Binds 1 [2Fe-2S] cluster.</text>
</comment>
<comment type="cofactor">
    <cofactor evidence="2">
        <name>[3Fe-4S] cluster</name>
        <dbReference type="ChEBI" id="CHEBI:21137"/>
    </cofactor>
    <text evidence="2">Binds 1 [3Fe-4S] cluster.</text>
</comment>
<comment type="cofactor">
    <cofactor evidence="2">
        <name>[4Fe-4S] cluster</name>
        <dbReference type="ChEBI" id="CHEBI:49883"/>
    </cofactor>
    <text evidence="2">Binds 1 [4Fe-4S] cluster.</text>
</comment>
<comment type="activity regulation">
    <text evidence="8">Enol-oxaloacetate inhibits the succinate dehydrogenase activity.</text>
</comment>
<comment type="biophysicochemical properties">
    <kinetics>
        <KM evidence="7">2.2 mM for L-malate</KM>
        <KM evidence="7">1.5 mM for D-malate</KM>
        <KM evidence="7">0.1 mM for succinate</KM>
        <Vmax evidence="7">0.05 umol/min/mg enzyme with L-malate as substrate</Vmax>
        <Vmax evidence="7">0.1 umol/min/mg enzyme with D-malate as substrate</Vmax>
        <Vmax evidence="7">10.0 umol/min/mg enzyme with succinate as substrate</Vmax>
    </kinetics>
</comment>
<comment type="pathway">
    <text>Carbohydrate metabolism; tricarboxylic acid cycle; fumarate from succinate (eukaryal route): step 1/1.</text>
</comment>
<comment type="subunit">
    <text evidence="1 2">Component of complex II composed of four subunits: the flavoprotein (FP) SDHA, iron-sulfur protein (IP) SDHB, and a cytochrome b560 composed of SDHC and SDHD (By similarity). Interacts with SDHAF1; the interaction is required for iron-sulfur cluster incorporation into SDHB (By similarity).</text>
</comment>
<comment type="subcellular location">
    <subcellularLocation>
        <location evidence="4">Mitochondrion inner membrane</location>
        <topology evidence="4">Peripheral membrane protein</topology>
        <orientation evidence="4">Matrix side</orientation>
    </subcellularLocation>
</comment>
<comment type="similarity">
    <text evidence="9">Belongs to the succinate dehydrogenase/fumarate reductase iron-sulfur protein family.</text>
</comment>
<gene>
    <name type="primary">SDHB</name>
</gene>
<sequence>MAAVVALSLRRRFPAAALGGARLQACRGAQTAAAAAPRIKKFAIYRWDPDKTGDKPHMQTYEIDLNNCGPMVLDALIKIKNEIDSTLTFRRSCREGICGSCAMNINGGNTLACTRRIDTNLSKVSKIYPLPHMYVIKDLVPDLSNFYAQYKSIEPYLKKKDESQGGKEQYLQSIEDREKLDGLYECILCACCSTSCPSYWWNGDKYLGPAVLMQAYRWMIDSRDDFTEERLAKLQDPFSLYRCHTIMNCTQTCPKGLNPGKAIAEIKKMMATYKEKQASA</sequence>
<accession>Q3T189</accession>
<reference key="1">
    <citation type="submission" date="2005-08" db="EMBL/GenBank/DDBJ databases">
        <authorList>
            <consortium name="NIH - Mammalian Gene Collection (MGC) project"/>
        </authorList>
    </citation>
    <scope>NUCLEOTIDE SEQUENCE [LARGE SCALE MRNA]</scope>
    <source>
        <strain>Crossbred X Angus</strain>
        <tissue>Ileum</tissue>
    </source>
</reference>
<reference key="2">
    <citation type="journal article" date="1988" name="Biochim. Biophys. Acta">
        <title>Oxidation of malate by the mitochondrial succinate-ubiquinone reductase.</title>
        <authorList>
            <person name="Belikova Y.O."/>
            <person name="Kotlyar A.B."/>
            <person name="Vinogradov A.D."/>
        </authorList>
    </citation>
    <scope>FUNCTION</scope>
    <scope>CATALYTIC ACTIVITY</scope>
    <scope>BIOPHYSICOCHEMICAL PROPERTIES</scope>
    <scope>ACTIVITY REGULATION</scope>
</reference>
<reference key="3">
    <citation type="journal article" date="1991" name="FEBS Lett.">
        <title>Direct demonstration of enol-oxaloacetate as an immediate product of malate oxidation by the mammalian succinate dehydrogenase.</title>
        <authorList>
            <person name="Panchenko M.V."/>
            <person name="Vinogradov A.D."/>
        </authorList>
    </citation>
    <scope>FUNCTION</scope>
    <scope>CATALYTIC ACTIVITY</scope>
</reference>
<proteinExistence type="evidence at protein level"/>
<dbReference type="EC" id="1.3.5.1" evidence="11"/>
<dbReference type="EC" id="1.1.5.-" evidence="10 11"/>
<dbReference type="EMBL" id="BC102067">
    <property type="protein sequence ID" value="AAI02068.1"/>
    <property type="molecule type" value="mRNA"/>
</dbReference>
<dbReference type="RefSeq" id="NP_001035573.1">
    <property type="nucleotide sequence ID" value="NM_001040483.2"/>
</dbReference>
<dbReference type="SMR" id="Q3T189"/>
<dbReference type="CORUM" id="Q3T189"/>
<dbReference type="FunCoup" id="Q3T189">
    <property type="interactions" value="2260"/>
</dbReference>
<dbReference type="IntAct" id="Q3T189">
    <property type="interactions" value="2"/>
</dbReference>
<dbReference type="STRING" id="9913.ENSBTAP00000062851"/>
<dbReference type="GlyGen" id="Q3T189">
    <property type="glycosylation" value="1 site, 1 O-linked glycan (1 site)"/>
</dbReference>
<dbReference type="PaxDb" id="9913-ENSBTAP00000010949"/>
<dbReference type="PeptideAtlas" id="Q3T189"/>
<dbReference type="GeneID" id="286840"/>
<dbReference type="KEGG" id="bta:286840"/>
<dbReference type="CTD" id="6390"/>
<dbReference type="eggNOG" id="KOG3049">
    <property type="taxonomic scope" value="Eukaryota"/>
</dbReference>
<dbReference type="HOGENOM" id="CLU_044838_0_2_1"/>
<dbReference type="InParanoid" id="Q3T189"/>
<dbReference type="OrthoDB" id="1696654at2759"/>
<dbReference type="TreeFam" id="TF300754"/>
<dbReference type="UniPathway" id="UPA00223">
    <property type="reaction ID" value="UER01006"/>
</dbReference>
<dbReference type="Proteomes" id="UP000009136">
    <property type="component" value="Unplaced"/>
</dbReference>
<dbReference type="GO" id="GO:0005743">
    <property type="term" value="C:mitochondrial inner membrane"/>
    <property type="evidence" value="ECO:0000250"/>
    <property type="project" value="UniProtKB"/>
</dbReference>
<dbReference type="GO" id="GO:0031966">
    <property type="term" value="C:mitochondrial membrane"/>
    <property type="evidence" value="ECO:0000318"/>
    <property type="project" value="GO_Central"/>
</dbReference>
<dbReference type="GO" id="GO:0045273">
    <property type="term" value="C:respiratory chain complex II (succinate dehydrogenase)"/>
    <property type="evidence" value="ECO:0000250"/>
    <property type="project" value="UniProtKB"/>
</dbReference>
<dbReference type="GO" id="GO:0051537">
    <property type="term" value="F:2 iron, 2 sulfur cluster binding"/>
    <property type="evidence" value="ECO:0000250"/>
    <property type="project" value="UniProtKB"/>
</dbReference>
<dbReference type="GO" id="GO:0051538">
    <property type="term" value="F:3 iron, 4 sulfur cluster binding"/>
    <property type="evidence" value="ECO:0000250"/>
    <property type="project" value="UniProtKB"/>
</dbReference>
<dbReference type="GO" id="GO:0051539">
    <property type="term" value="F:4 iron, 4 sulfur cluster binding"/>
    <property type="evidence" value="ECO:0000250"/>
    <property type="project" value="UniProtKB"/>
</dbReference>
<dbReference type="GO" id="GO:0009055">
    <property type="term" value="F:electron transfer activity"/>
    <property type="evidence" value="ECO:0007669"/>
    <property type="project" value="InterPro"/>
</dbReference>
<dbReference type="GO" id="GO:0046872">
    <property type="term" value="F:metal ion binding"/>
    <property type="evidence" value="ECO:0007669"/>
    <property type="project" value="UniProtKB-KW"/>
</dbReference>
<dbReference type="GO" id="GO:0008177">
    <property type="term" value="F:succinate dehydrogenase (quinone) activity"/>
    <property type="evidence" value="ECO:0000250"/>
    <property type="project" value="UniProtKB"/>
</dbReference>
<dbReference type="GO" id="GO:0048039">
    <property type="term" value="F:ubiquinone binding"/>
    <property type="evidence" value="ECO:0000250"/>
    <property type="project" value="UniProtKB"/>
</dbReference>
<dbReference type="GO" id="GO:0009060">
    <property type="term" value="P:aerobic respiration"/>
    <property type="evidence" value="ECO:0000318"/>
    <property type="project" value="GO_Central"/>
</dbReference>
<dbReference type="GO" id="GO:0022904">
    <property type="term" value="P:respiratory electron transport chain"/>
    <property type="evidence" value="ECO:0000318"/>
    <property type="project" value="GO_Central"/>
</dbReference>
<dbReference type="GO" id="GO:0006099">
    <property type="term" value="P:tricarboxylic acid cycle"/>
    <property type="evidence" value="ECO:0007669"/>
    <property type="project" value="UniProtKB-UniPathway"/>
</dbReference>
<dbReference type="CDD" id="cd00207">
    <property type="entry name" value="fer2"/>
    <property type="match status" value="1"/>
</dbReference>
<dbReference type="FunFam" id="1.10.1060.10:FF:000029">
    <property type="entry name" value="Succinate dehydrogenase [ubiquinone] iron-sulfur subunit, mitochondrial"/>
    <property type="match status" value="1"/>
</dbReference>
<dbReference type="FunFam" id="3.10.20.30:FF:000007">
    <property type="entry name" value="Succinate dehydrogenase [ubiquinone] iron-sulfur subunit, mitochondrial"/>
    <property type="match status" value="1"/>
</dbReference>
<dbReference type="Gene3D" id="3.10.20.30">
    <property type="match status" value="1"/>
</dbReference>
<dbReference type="Gene3D" id="1.10.1060.10">
    <property type="entry name" value="Alpha-helical ferredoxin"/>
    <property type="match status" value="1"/>
</dbReference>
<dbReference type="InterPro" id="IPR036010">
    <property type="entry name" value="2Fe-2S_ferredoxin-like_sf"/>
</dbReference>
<dbReference type="InterPro" id="IPR001041">
    <property type="entry name" value="2Fe-2S_ferredoxin-type"/>
</dbReference>
<dbReference type="InterPro" id="IPR006058">
    <property type="entry name" value="2Fe2S_fd_BS"/>
</dbReference>
<dbReference type="InterPro" id="IPR017896">
    <property type="entry name" value="4Fe4S_Fe-S-bd"/>
</dbReference>
<dbReference type="InterPro" id="IPR017900">
    <property type="entry name" value="4Fe4S_Fe_S_CS"/>
</dbReference>
<dbReference type="InterPro" id="IPR012675">
    <property type="entry name" value="Beta-grasp_dom_sf"/>
</dbReference>
<dbReference type="InterPro" id="IPR009051">
    <property type="entry name" value="Helical_ferredxn"/>
</dbReference>
<dbReference type="InterPro" id="IPR050573">
    <property type="entry name" value="SDH/FRD_Iron-Sulfur"/>
</dbReference>
<dbReference type="InterPro" id="IPR004489">
    <property type="entry name" value="Succ_DH/fum_Rdtase_Fe-S"/>
</dbReference>
<dbReference type="InterPro" id="IPR025192">
    <property type="entry name" value="Succ_DH/fum_Rdtase_N"/>
</dbReference>
<dbReference type="NCBIfam" id="TIGR00384">
    <property type="entry name" value="dhsB"/>
    <property type="match status" value="1"/>
</dbReference>
<dbReference type="NCBIfam" id="NF004616">
    <property type="entry name" value="PRK05950.1"/>
    <property type="match status" value="1"/>
</dbReference>
<dbReference type="PANTHER" id="PTHR11921:SF29">
    <property type="entry name" value="SUCCINATE DEHYDROGENASE [UBIQUINONE] IRON-SULFUR SUBUNIT, MITOCHONDRIAL"/>
    <property type="match status" value="1"/>
</dbReference>
<dbReference type="PANTHER" id="PTHR11921">
    <property type="entry name" value="SUCCINATE DEHYDROGENASE IRON-SULFUR PROTEIN"/>
    <property type="match status" value="1"/>
</dbReference>
<dbReference type="Pfam" id="PF13085">
    <property type="entry name" value="Fer2_3"/>
    <property type="match status" value="1"/>
</dbReference>
<dbReference type="Pfam" id="PF13534">
    <property type="entry name" value="Fer4_17"/>
    <property type="match status" value="1"/>
</dbReference>
<dbReference type="SUPFAM" id="SSF54292">
    <property type="entry name" value="2Fe-2S ferredoxin-like"/>
    <property type="match status" value="1"/>
</dbReference>
<dbReference type="SUPFAM" id="SSF46548">
    <property type="entry name" value="alpha-helical ferredoxin"/>
    <property type="match status" value="1"/>
</dbReference>
<dbReference type="PROSITE" id="PS00197">
    <property type="entry name" value="2FE2S_FER_1"/>
    <property type="match status" value="1"/>
</dbReference>
<dbReference type="PROSITE" id="PS51085">
    <property type="entry name" value="2FE2S_FER_2"/>
    <property type="match status" value="1"/>
</dbReference>
<dbReference type="PROSITE" id="PS00198">
    <property type="entry name" value="4FE4S_FER_1"/>
    <property type="match status" value="1"/>
</dbReference>
<dbReference type="PROSITE" id="PS51379">
    <property type="entry name" value="4FE4S_FER_2"/>
    <property type="match status" value="1"/>
</dbReference>
<feature type="transit peptide" description="Mitochondrion" evidence="1">
    <location>
        <begin position="1"/>
        <end position="28"/>
    </location>
</feature>
<feature type="chain" id="PRO_0000247594" description="Succinate dehydrogenase [ubiquinone] iron-sulfur subunit, mitochondrial">
    <location>
        <begin position="29"/>
        <end position="280"/>
    </location>
</feature>
<feature type="domain" description="2Fe-2S ferredoxin-type" evidence="5">
    <location>
        <begin position="40"/>
        <end position="133"/>
    </location>
</feature>
<feature type="domain" description="4Fe-4S ferredoxin-type" evidence="6">
    <location>
        <begin position="176"/>
        <end position="206"/>
    </location>
</feature>
<feature type="region of interest" description="Interaction with SDHAF1" evidence="1">
    <location>
        <begin position="146"/>
        <end position="218"/>
    </location>
</feature>
<feature type="binding site" evidence="2">
    <location>
        <position position="93"/>
    </location>
    <ligand>
        <name>[2Fe-2S] cluster</name>
        <dbReference type="ChEBI" id="CHEBI:190135"/>
    </ligand>
</feature>
<feature type="binding site" evidence="2">
    <location>
        <position position="98"/>
    </location>
    <ligand>
        <name>[2Fe-2S] cluster</name>
        <dbReference type="ChEBI" id="CHEBI:190135"/>
    </ligand>
</feature>
<feature type="binding site" evidence="2">
    <location>
        <position position="101"/>
    </location>
    <ligand>
        <name>[2Fe-2S] cluster</name>
        <dbReference type="ChEBI" id="CHEBI:190135"/>
    </ligand>
</feature>
<feature type="binding site" evidence="2">
    <location>
        <position position="113"/>
    </location>
    <ligand>
        <name>[2Fe-2S] cluster</name>
        <dbReference type="ChEBI" id="CHEBI:190135"/>
    </ligand>
</feature>
<feature type="binding site" evidence="2">
    <location>
        <position position="186"/>
    </location>
    <ligand>
        <name>[4Fe-4S] cluster</name>
        <dbReference type="ChEBI" id="CHEBI:49883"/>
    </ligand>
</feature>
<feature type="binding site" evidence="2">
    <location>
        <position position="189"/>
    </location>
    <ligand>
        <name>[4Fe-4S] cluster</name>
        <dbReference type="ChEBI" id="CHEBI:49883"/>
    </ligand>
</feature>
<feature type="binding site" evidence="2">
    <location>
        <position position="192"/>
    </location>
    <ligand>
        <name>[4Fe-4S] cluster</name>
        <dbReference type="ChEBI" id="CHEBI:49883"/>
    </ligand>
</feature>
<feature type="binding site" evidence="2">
    <location>
        <position position="196"/>
    </location>
    <ligand>
        <name>[3Fe-4S] cluster</name>
        <dbReference type="ChEBI" id="CHEBI:21137"/>
    </ligand>
</feature>
<feature type="binding site" evidence="2">
    <location>
        <position position="201"/>
    </location>
    <ligand>
        <name>a ubiquinone</name>
        <dbReference type="ChEBI" id="CHEBI:16389"/>
        <note>ligand shared with DHSD</note>
    </ligand>
</feature>
<feature type="binding site" evidence="2">
    <location>
        <position position="243"/>
    </location>
    <ligand>
        <name>[3Fe-4S] cluster</name>
        <dbReference type="ChEBI" id="CHEBI:21137"/>
    </ligand>
</feature>
<feature type="binding site" evidence="2">
    <location>
        <position position="249"/>
    </location>
    <ligand>
        <name>[3Fe-4S] cluster</name>
        <dbReference type="ChEBI" id="CHEBI:21137"/>
    </ligand>
</feature>
<feature type="binding site" evidence="2">
    <location>
        <position position="253"/>
    </location>
    <ligand>
        <name>[4Fe-4S] cluster</name>
        <dbReference type="ChEBI" id="CHEBI:49883"/>
    </ligand>
</feature>
<feature type="modified residue" description="N6-acetyllysine" evidence="3">
    <location>
        <position position="51"/>
    </location>
</feature>
<feature type="modified residue" description="N6-acetyllysine" evidence="3">
    <location>
        <position position="55"/>
    </location>
</feature>
<protein>
    <recommendedName>
        <fullName>Succinate dehydrogenase [ubiquinone] iron-sulfur subunit, mitochondrial</fullName>
        <ecNumber evidence="11">1.3.5.1</ecNumber>
    </recommendedName>
    <alternativeName>
        <fullName>Iron-sulfur subunit of complex II</fullName>
        <shortName>IP</shortName>
    </alternativeName>
    <alternativeName>
        <fullName evidence="9">Malate dehydrogenase [quinone] iron-sulfur subunit</fullName>
        <ecNumber evidence="10 11">1.1.5.-</ecNumber>
    </alternativeName>
</protein>